<keyword id="KW-0066">ATP synthesis</keyword>
<keyword id="KW-0997">Cell inner membrane</keyword>
<keyword id="KW-1003">Cell membrane</keyword>
<keyword id="KW-0139">CF(1)</keyword>
<keyword id="KW-0375">Hydrogen ion transport</keyword>
<keyword id="KW-0406">Ion transport</keyword>
<keyword id="KW-0472">Membrane</keyword>
<keyword id="KW-0813">Transport</keyword>
<organism>
    <name type="scientific">Paracidovorax citrulli (strain AAC00-1)</name>
    <name type="common">Acidovorax citrulli</name>
    <dbReference type="NCBI Taxonomy" id="397945"/>
    <lineage>
        <taxon>Bacteria</taxon>
        <taxon>Pseudomonadati</taxon>
        <taxon>Pseudomonadota</taxon>
        <taxon>Betaproteobacteria</taxon>
        <taxon>Burkholderiales</taxon>
        <taxon>Comamonadaceae</taxon>
        <taxon>Paracidovorax</taxon>
    </lineage>
</organism>
<comment type="function">
    <text evidence="1">F(1)F(0) ATP synthase produces ATP from ADP in the presence of a proton or sodium gradient. F-type ATPases consist of two structural domains, F(1) containing the extramembraneous catalytic core and F(0) containing the membrane proton channel, linked together by a central stalk and a peripheral stalk. During catalysis, ATP synthesis in the catalytic domain of F(1) is coupled via a rotary mechanism of the central stalk subunits to proton translocation.</text>
</comment>
<comment type="function">
    <text evidence="1">This protein is part of the stalk that links CF(0) to CF(1). It either transmits conformational changes from CF(0) to CF(1) or is implicated in proton conduction.</text>
</comment>
<comment type="subunit">
    <text evidence="1">F-type ATPases have 2 components, F(1) - the catalytic core - and F(0) - the membrane proton channel. F(1) has five subunits: alpha(3), beta(3), gamma(1), delta(1), epsilon(1). F(0) has three main subunits: a(1), b(2) and c(10-14). The alpha and beta chains form an alternating ring which encloses part of the gamma chain. F(1) is attached to F(0) by a central stalk formed by the gamma and epsilon chains, while a peripheral stalk is formed by the delta and b chains.</text>
</comment>
<comment type="subcellular location">
    <subcellularLocation>
        <location evidence="1">Cell inner membrane</location>
        <topology evidence="1">Peripheral membrane protein</topology>
    </subcellularLocation>
</comment>
<comment type="similarity">
    <text evidence="1">Belongs to the ATPase delta chain family.</text>
</comment>
<evidence type="ECO:0000255" key="1">
    <source>
        <dbReference type="HAMAP-Rule" id="MF_01416"/>
    </source>
</evidence>
<accession>A1TJ38</accession>
<reference key="1">
    <citation type="submission" date="2006-12" db="EMBL/GenBank/DDBJ databases">
        <title>Complete sequence of Acidovorax avenae subsp. citrulli AAC00-1.</title>
        <authorList>
            <person name="Copeland A."/>
            <person name="Lucas S."/>
            <person name="Lapidus A."/>
            <person name="Barry K."/>
            <person name="Detter J.C."/>
            <person name="Glavina del Rio T."/>
            <person name="Dalin E."/>
            <person name="Tice H."/>
            <person name="Pitluck S."/>
            <person name="Kiss H."/>
            <person name="Brettin T."/>
            <person name="Bruce D."/>
            <person name="Han C."/>
            <person name="Tapia R."/>
            <person name="Gilna P."/>
            <person name="Schmutz J."/>
            <person name="Larimer F."/>
            <person name="Land M."/>
            <person name="Hauser L."/>
            <person name="Kyrpides N."/>
            <person name="Kim E."/>
            <person name="Stahl D."/>
            <person name="Richardson P."/>
        </authorList>
    </citation>
    <scope>NUCLEOTIDE SEQUENCE [LARGE SCALE GENOMIC DNA]</scope>
    <source>
        <strain>AAC00-1</strain>
    </source>
</reference>
<protein>
    <recommendedName>
        <fullName evidence="1">ATP synthase subunit delta</fullName>
    </recommendedName>
    <alternativeName>
        <fullName evidence="1">ATP synthase F(1) sector subunit delta</fullName>
    </alternativeName>
    <alternativeName>
        <fullName evidence="1">F-type ATPase subunit delta</fullName>
        <shortName evidence="1">F-ATPase subunit delta</shortName>
    </alternativeName>
</protein>
<feature type="chain" id="PRO_0000370867" description="ATP synthase subunit delta">
    <location>
        <begin position="1"/>
        <end position="180"/>
    </location>
</feature>
<name>ATPD_PARC0</name>
<dbReference type="EMBL" id="CP000512">
    <property type="protein sequence ID" value="ABM30976.1"/>
    <property type="molecule type" value="Genomic_DNA"/>
</dbReference>
<dbReference type="RefSeq" id="WP_011793553.1">
    <property type="nucleotide sequence ID" value="NC_008752.1"/>
</dbReference>
<dbReference type="SMR" id="A1TJ38"/>
<dbReference type="STRING" id="397945.Aave_0369"/>
<dbReference type="GeneID" id="79790177"/>
<dbReference type="KEGG" id="aav:Aave_0369"/>
<dbReference type="eggNOG" id="COG0712">
    <property type="taxonomic scope" value="Bacteria"/>
</dbReference>
<dbReference type="HOGENOM" id="CLU_085114_3_0_4"/>
<dbReference type="OrthoDB" id="9816221at2"/>
<dbReference type="Proteomes" id="UP000002596">
    <property type="component" value="Chromosome"/>
</dbReference>
<dbReference type="GO" id="GO:0005886">
    <property type="term" value="C:plasma membrane"/>
    <property type="evidence" value="ECO:0007669"/>
    <property type="project" value="UniProtKB-SubCell"/>
</dbReference>
<dbReference type="GO" id="GO:0045259">
    <property type="term" value="C:proton-transporting ATP synthase complex"/>
    <property type="evidence" value="ECO:0007669"/>
    <property type="project" value="UniProtKB-KW"/>
</dbReference>
<dbReference type="GO" id="GO:0046933">
    <property type="term" value="F:proton-transporting ATP synthase activity, rotational mechanism"/>
    <property type="evidence" value="ECO:0007669"/>
    <property type="project" value="UniProtKB-UniRule"/>
</dbReference>
<dbReference type="Gene3D" id="1.10.520.20">
    <property type="entry name" value="N-terminal domain of the delta subunit of the F1F0-ATP synthase"/>
    <property type="match status" value="1"/>
</dbReference>
<dbReference type="HAMAP" id="MF_01416">
    <property type="entry name" value="ATP_synth_delta_bact"/>
    <property type="match status" value="1"/>
</dbReference>
<dbReference type="InterPro" id="IPR026015">
    <property type="entry name" value="ATP_synth_OSCP/delta_N_sf"/>
</dbReference>
<dbReference type="InterPro" id="IPR000711">
    <property type="entry name" value="ATPase_OSCP/dsu"/>
</dbReference>
<dbReference type="NCBIfam" id="TIGR01145">
    <property type="entry name" value="ATP_synt_delta"/>
    <property type="match status" value="1"/>
</dbReference>
<dbReference type="NCBIfam" id="NF004402">
    <property type="entry name" value="PRK05758.2-2"/>
    <property type="match status" value="1"/>
</dbReference>
<dbReference type="PANTHER" id="PTHR11910">
    <property type="entry name" value="ATP SYNTHASE DELTA CHAIN"/>
    <property type="match status" value="1"/>
</dbReference>
<dbReference type="Pfam" id="PF00213">
    <property type="entry name" value="OSCP"/>
    <property type="match status" value="1"/>
</dbReference>
<dbReference type="PRINTS" id="PR00125">
    <property type="entry name" value="ATPASEDELTA"/>
</dbReference>
<dbReference type="SUPFAM" id="SSF47928">
    <property type="entry name" value="N-terminal domain of the delta subunit of the F1F0-ATP synthase"/>
    <property type="match status" value="1"/>
</dbReference>
<sequence>MAELATIARPYAEALFKACAAQPGADLGSTVAWVDELAAIAADPQVRQLADNPKIESGQLFDLIAGVVRAPLSDAARNFLRVLIDNGRLEALPEVAAQFRALVNRQSGSSDAVVHSAFPIDAAALAELGASLEKRFGRKLNLSVQLDESLIGGVRVAVGDEVLDTSVKARLEQMKAALVA</sequence>
<proteinExistence type="inferred from homology"/>
<gene>
    <name evidence="1" type="primary">atpH</name>
    <name type="ordered locus">Aave_0369</name>
</gene>